<accession>C0Q1G1</accession>
<organism>
    <name type="scientific">Salmonella paratyphi C (strain RKS4594)</name>
    <dbReference type="NCBI Taxonomy" id="476213"/>
    <lineage>
        <taxon>Bacteria</taxon>
        <taxon>Pseudomonadati</taxon>
        <taxon>Pseudomonadota</taxon>
        <taxon>Gammaproteobacteria</taxon>
        <taxon>Enterobacterales</taxon>
        <taxon>Enterobacteriaceae</taxon>
        <taxon>Salmonella</taxon>
    </lineage>
</organism>
<keyword id="KW-0378">Hydrolase</keyword>
<keyword id="KW-0546">Nucleotide metabolism</keyword>
<keyword id="KW-0547">Nucleotide-binding</keyword>
<proteinExistence type="inferred from homology"/>
<reference key="1">
    <citation type="journal article" date="2009" name="PLoS ONE">
        <title>Salmonella paratyphi C: genetic divergence from Salmonella choleraesuis and pathogenic convergence with Salmonella typhi.</title>
        <authorList>
            <person name="Liu W.-Q."/>
            <person name="Feng Y."/>
            <person name="Wang Y."/>
            <person name="Zou Q.-H."/>
            <person name="Chen F."/>
            <person name="Guo J.-T."/>
            <person name="Peng Y.-H."/>
            <person name="Jin Y."/>
            <person name="Li Y.-G."/>
            <person name="Hu S.-N."/>
            <person name="Johnston R.N."/>
            <person name="Liu G.-R."/>
            <person name="Liu S.-L."/>
        </authorList>
    </citation>
    <scope>NUCLEOTIDE SEQUENCE [LARGE SCALE GENOMIC DNA]</scope>
    <source>
        <strain>RKS4594</strain>
    </source>
</reference>
<dbReference type="EC" id="3.5.4.13" evidence="1"/>
<dbReference type="EMBL" id="CP000857">
    <property type="protein sequence ID" value="ACN45747.1"/>
    <property type="molecule type" value="Genomic_DNA"/>
</dbReference>
<dbReference type="RefSeq" id="WP_001234783.1">
    <property type="nucleotide sequence ID" value="NC_012125.1"/>
</dbReference>
<dbReference type="SMR" id="C0Q1G1"/>
<dbReference type="KEGG" id="sei:SPC_1599"/>
<dbReference type="HOGENOM" id="CLU_087476_2_0_6"/>
<dbReference type="UniPathway" id="UPA00610">
    <property type="reaction ID" value="UER00665"/>
</dbReference>
<dbReference type="Proteomes" id="UP000001599">
    <property type="component" value="Chromosome"/>
</dbReference>
<dbReference type="GO" id="GO:0008829">
    <property type="term" value="F:dCTP deaminase activity"/>
    <property type="evidence" value="ECO:0007669"/>
    <property type="project" value="UniProtKB-UniRule"/>
</dbReference>
<dbReference type="GO" id="GO:0000166">
    <property type="term" value="F:nucleotide binding"/>
    <property type="evidence" value="ECO:0007669"/>
    <property type="project" value="UniProtKB-KW"/>
</dbReference>
<dbReference type="GO" id="GO:0006226">
    <property type="term" value="P:dUMP biosynthetic process"/>
    <property type="evidence" value="ECO:0007669"/>
    <property type="project" value="UniProtKB-UniPathway"/>
</dbReference>
<dbReference type="GO" id="GO:0006229">
    <property type="term" value="P:dUTP biosynthetic process"/>
    <property type="evidence" value="ECO:0007669"/>
    <property type="project" value="UniProtKB-UniRule"/>
</dbReference>
<dbReference type="GO" id="GO:0015949">
    <property type="term" value="P:nucleobase-containing small molecule interconversion"/>
    <property type="evidence" value="ECO:0007669"/>
    <property type="project" value="TreeGrafter"/>
</dbReference>
<dbReference type="CDD" id="cd07557">
    <property type="entry name" value="trimeric_dUTPase"/>
    <property type="match status" value="1"/>
</dbReference>
<dbReference type="FunFam" id="2.70.40.10:FF:000003">
    <property type="entry name" value="dCTP deaminase"/>
    <property type="match status" value="1"/>
</dbReference>
<dbReference type="Gene3D" id="2.70.40.10">
    <property type="match status" value="1"/>
</dbReference>
<dbReference type="HAMAP" id="MF_00146">
    <property type="entry name" value="dCTP_deaminase"/>
    <property type="match status" value="1"/>
</dbReference>
<dbReference type="InterPro" id="IPR011962">
    <property type="entry name" value="dCTP_deaminase"/>
</dbReference>
<dbReference type="InterPro" id="IPR036157">
    <property type="entry name" value="dUTPase-like_sf"/>
</dbReference>
<dbReference type="InterPro" id="IPR033704">
    <property type="entry name" value="dUTPase_trimeric"/>
</dbReference>
<dbReference type="NCBIfam" id="TIGR02274">
    <property type="entry name" value="dCTP_deam"/>
    <property type="match status" value="1"/>
</dbReference>
<dbReference type="PANTHER" id="PTHR42680">
    <property type="entry name" value="DCTP DEAMINASE"/>
    <property type="match status" value="1"/>
</dbReference>
<dbReference type="PANTHER" id="PTHR42680:SF3">
    <property type="entry name" value="DCTP DEAMINASE"/>
    <property type="match status" value="1"/>
</dbReference>
<dbReference type="Pfam" id="PF22769">
    <property type="entry name" value="DCD"/>
    <property type="match status" value="1"/>
</dbReference>
<dbReference type="SUPFAM" id="SSF51283">
    <property type="entry name" value="dUTPase-like"/>
    <property type="match status" value="1"/>
</dbReference>
<feature type="chain" id="PRO_1000123157" description="dCTP deaminase">
    <location>
        <begin position="1"/>
        <end position="193"/>
    </location>
</feature>
<feature type="region of interest" description="Disordered" evidence="2">
    <location>
        <begin position="169"/>
        <end position="193"/>
    </location>
</feature>
<feature type="active site" description="Proton donor/acceptor" evidence="1">
    <location>
        <position position="138"/>
    </location>
</feature>
<feature type="binding site" evidence="1">
    <location>
        <begin position="110"/>
        <end position="115"/>
    </location>
    <ligand>
        <name>dCTP</name>
        <dbReference type="ChEBI" id="CHEBI:61481"/>
    </ligand>
</feature>
<feature type="binding site" evidence="1">
    <location>
        <position position="128"/>
    </location>
    <ligand>
        <name>dCTP</name>
        <dbReference type="ChEBI" id="CHEBI:61481"/>
    </ligand>
</feature>
<feature type="binding site" evidence="1">
    <location>
        <begin position="136"/>
        <end position="138"/>
    </location>
    <ligand>
        <name>dCTP</name>
        <dbReference type="ChEBI" id="CHEBI:61481"/>
    </ligand>
</feature>
<feature type="binding site" evidence="1">
    <location>
        <position position="171"/>
    </location>
    <ligand>
        <name>dCTP</name>
        <dbReference type="ChEBI" id="CHEBI:61481"/>
    </ligand>
</feature>
<feature type="binding site" evidence="1">
    <location>
        <position position="178"/>
    </location>
    <ligand>
        <name>dCTP</name>
        <dbReference type="ChEBI" id="CHEBI:61481"/>
    </ligand>
</feature>
<feature type="binding site" evidence="1">
    <location>
        <position position="182"/>
    </location>
    <ligand>
        <name>dCTP</name>
        <dbReference type="ChEBI" id="CHEBI:61481"/>
    </ligand>
</feature>
<evidence type="ECO:0000255" key="1">
    <source>
        <dbReference type="HAMAP-Rule" id="MF_00146"/>
    </source>
</evidence>
<evidence type="ECO:0000256" key="2">
    <source>
        <dbReference type="SAM" id="MobiDB-lite"/>
    </source>
</evidence>
<comment type="function">
    <text evidence="1">Catalyzes the deamination of dCTP to dUTP.</text>
</comment>
<comment type="catalytic activity">
    <reaction evidence="1">
        <text>dCTP + H2O + H(+) = dUTP + NH4(+)</text>
        <dbReference type="Rhea" id="RHEA:22680"/>
        <dbReference type="ChEBI" id="CHEBI:15377"/>
        <dbReference type="ChEBI" id="CHEBI:15378"/>
        <dbReference type="ChEBI" id="CHEBI:28938"/>
        <dbReference type="ChEBI" id="CHEBI:61481"/>
        <dbReference type="ChEBI" id="CHEBI:61555"/>
        <dbReference type="EC" id="3.5.4.13"/>
    </reaction>
</comment>
<comment type="pathway">
    <text evidence="1">Pyrimidine metabolism; dUMP biosynthesis; dUMP from dCTP (dUTP route): step 1/2.</text>
</comment>
<comment type="subunit">
    <text evidence="1">Homotrimer.</text>
</comment>
<comment type="similarity">
    <text evidence="1">Belongs to the dCTP deaminase family.</text>
</comment>
<sequence>MRLCDRDIEAWLDEGRLSITPRPPVERINGATVDVRLGNKFRTFRGHTAAFIDLSGPKDEVSAALDRVMSDEIVLPDGEAFYLHPGELALAVTFESVTLPPDLVGWLDGRSSLARLGLMVHVTAHRIDPGWSGCIVLEFYNSGKLPLALRPGMLIGALSFEPLSGPAARPYNRRQDAKYRDQQGAVASRIDKD</sequence>
<gene>
    <name evidence="1" type="primary">dcd</name>
    <name type="ordered locus">SPC_1599</name>
</gene>
<protein>
    <recommendedName>
        <fullName evidence="1">dCTP deaminase</fullName>
        <ecNumber evidence="1">3.5.4.13</ecNumber>
    </recommendedName>
    <alternativeName>
        <fullName evidence="1">Deoxycytidine triphosphate deaminase</fullName>
    </alternativeName>
</protein>
<name>DCD_SALPC</name>